<evidence type="ECO:0000250" key="1"/>
<evidence type="ECO:0000255" key="2">
    <source>
        <dbReference type="PROSITE-ProRule" id="PRU00393"/>
    </source>
</evidence>
<evidence type="ECO:0000255" key="3">
    <source>
        <dbReference type="PROSITE-ProRule" id="PRU00394"/>
    </source>
</evidence>
<feature type="chain" id="PRO_0000313698" description="HTH-type transcriptional repressor AllR">
    <location>
        <begin position="1"/>
        <end position="271"/>
    </location>
</feature>
<feature type="domain" description="HTH iclR-type" evidence="2">
    <location>
        <begin position="21"/>
        <end position="83"/>
    </location>
</feature>
<feature type="domain" description="IclR-ED" evidence="3">
    <location>
        <begin position="98"/>
        <end position="267"/>
    </location>
</feature>
<feature type="DNA-binding region" description="H-T-H motif" evidence="2">
    <location>
        <begin position="43"/>
        <end position="62"/>
    </location>
</feature>
<feature type="binding site" evidence="1">
    <location>
        <begin position="154"/>
        <end position="156"/>
    </location>
    <ligand>
        <name>glyoxylate</name>
        <dbReference type="ChEBI" id="CHEBI:36655"/>
    </ligand>
</feature>
<feature type="binding site" evidence="1">
    <location>
        <position position="207"/>
    </location>
    <ligand>
        <name>glyoxylate</name>
        <dbReference type="ChEBI" id="CHEBI:36655"/>
    </ligand>
</feature>
<feature type="binding site" evidence="1">
    <location>
        <position position="217"/>
    </location>
    <ligand>
        <name>glyoxylate</name>
        <dbReference type="ChEBI" id="CHEBI:36655"/>
    </ligand>
</feature>
<feature type="binding site" evidence="1">
    <location>
        <begin position="234"/>
        <end position="236"/>
    </location>
    <ligand>
        <name>glyoxylate</name>
        <dbReference type="ChEBI" id="CHEBI:36655"/>
    </ligand>
</feature>
<keyword id="KW-0238">DNA-binding</keyword>
<keyword id="KW-0678">Repressor</keyword>
<keyword id="KW-0804">Transcription</keyword>
<keyword id="KW-0805">Transcription regulation</keyword>
<sequence>MTEVRRRGRPGQAEPVAQKGAQALERGIAILQYLEKSGGSSSVSDISLNLDLPLSTTFRLLKVLQAADFVYQDSQLGWWHIGLGVFNVGAAYIHNRDVLSVAGPFMRRLMLLSGETVNVAIRNGNEAVLIGQLECKSMVRMCAPLGSRLPLHASGAGKALLYPLAEEELMSIILQTGLQQFTPTTLVDMPTLLKDLEQARELGYTVDKEEHVVGLNCIASAIYDDVGSVVAAISISGPSSRLTEDRFVSQGELVRDTARDISTALGLKAHL</sequence>
<reference key="1">
    <citation type="journal article" date="2006" name="Proc. Natl. Acad. Sci. U.S.A.">
        <title>Identification of genes subject to positive selection in uropathogenic strains of Escherichia coli: a comparative genomics approach.</title>
        <authorList>
            <person name="Chen S.L."/>
            <person name="Hung C.-S."/>
            <person name="Xu J."/>
            <person name="Reigstad C.S."/>
            <person name="Magrini V."/>
            <person name="Sabo A."/>
            <person name="Blasiar D."/>
            <person name="Bieri T."/>
            <person name="Meyer R.R."/>
            <person name="Ozersky P."/>
            <person name="Armstrong J.R."/>
            <person name="Fulton R.S."/>
            <person name="Latreille J.P."/>
            <person name="Spieth J."/>
            <person name="Hooton T.M."/>
            <person name="Mardis E.R."/>
            <person name="Hultgren S.J."/>
            <person name="Gordon J.I."/>
        </authorList>
    </citation>
    <scope>NUCLEOTIDE SEQUENCE [LARGE SCALE GENOMIC DNA]</scope>
    <source>
        <strain>UTI89 / UPEC</strain>
    </source>
</reference>
<comment type="function">
    <text evidence="1">Negative regulator of allantoin and glyoxylate utilization operons. Binds to the gcl promoter and to the allS-allA intergenic region (By similarity).</text>
</comment>
<accession>Q1RF28</accession>
<protein>
    <recommendedName>
        <fullName>HTH-type transcriptional repressor AllR</fullName>
    </recommendedName>
    <alternativeName>
        <fullName>Negative regulator of allantoin and glyoxylate utilization operons</fullName>
    </alternativeName>
</protein>
<gene>
    <name type="primary">allR</name>
    <name type="ordered locus">UTI89_C0535</name>
</gene>
<organism>
    <name type="scientific">Escherichia coli (strain UTI89 / UPEC)</name>
    <dbReference type="NCBI Taxonomy" id="364106"/>
    <lineage>
        <taxon>Bacteria</taxon>
        <taxon>Pseudomonadati</taxon>
        <taxon>Pseudomonadota</taxon>
        <taxon>Gammaproteobacteria</taxon>
        <taxon>Enterobacterales</taxon>
        <taxon>Enterobacteriaceae</taxon>
        <taxon>Escherichia</taxon>
    </lineage>
</organism>
<dbReference type="EMBL" id="CP000243">
    <property type="protein sequence ID" value="ABE06036.1"/>
    <property type="molecule type" value="Genomic_DNA"/>
</dbReference>
<dbReference type="RefSeq" id="WP_000141274.1">
    <property type="nucleotide sequence ID" value="NZ_CP064825.1"/>
</dbReference>
<dbReference type="SMR" id="Q1RF28"/>
<dbReference type="KEGG" id="eci:UTI89_C0535"/>
<dbReference type="HOGENOM" id="CLU_062618_7_1_6"/>
<dbReference type="Proteomes" id="UP000001952">
    <property type="component" value="Chromosome"/>
</dbReference>
<dbReference type="GO" id="GO:0003677">
    <property type="term" value="F:DNA binding"/>
    <property type="evidence" value="ECO:0007669"/>
    <property type="project" value="UniProtKB-KW"/>
</dbReference>
<dbReference type="GO" id="GO:0003700">
    <property type="term" value="F:DNA-binding transcription factor activity"/>
    <property type="evidence" value="ECO:0007669"/>
    <property type="project" value="TreeGrafter"/>
</dbReference>
<dbReference type="GO" id="GO:0045892">
    <property type="term" value="P:negative regulation of DNA-templated transcription"/>
    <property type="evidence" value="ECO:0007669"/>
    <property type="project" value="TreeGrafter"/>
</dbReference>
<dbReference type="FunFam" id="1.10.10.10:FF:000198">
    <property type="entry name" value="HTH-type transcriptional repressor AllR"/>
    <property type="match status" value="1"/>
</dbReference>
<dbReference type="FunFam" id="3.30.450.40:FF:000017">
    <property type="entry name" value="HTH-type transcriptional repressor AllR"/>
    <property type="match status" value="1"/>
</dbReference>
<dbReference type="Gene3D" id="3.30.450.40">
    <property type="match status" value="1"/>
</dbReference>
<dbReference type="Gene3D" id="1.10.10.10">
    <property type="entry name" value="Winged helix-like DNA-binding domain superfamily/Winged helix DNA-binding domain"/>
    <property type="match status" value="1"/>
</dbReference>
<dbReference type="InterPro" id="IPR029016">
    <property type="entry name" value="GAF-like_dom_sf"/>
</dbReference>
<dbReference type="InterPro" id="IPR050707">
    <property type="entry name" value="HTH_MetabolicPath_Reg"/>
</dbReference>
<dbReference type="InterPro" id="IPR014757">
    <property type="entry name" value="Tscrpt_reg_IclR_C"/>
</dbReference>
<dbReference type="InterPro" id="IPR005471">
    <property type="entry name" value="Tscrpt_reg_IclR_N"/>
</dbReference>
<dbReference type="InterPro" id="IPR036388">
    <property type="entry name" value="WH-like_DNA-bd_sf"/>
</dbReference>
<dbReference type="InterPro" id="IPR036390">
    <property type="entry name" value="WH_DNA-bd_sf"/>
</dbReference>
<dbReference type="NCBIfam" id="NF007548">
    <property type="entry name" value="PRK10163.1"/>
    <property type="match status" value="1"/>
</dbReference>
<dbReference type="PANTHER" id="PTHR30136">
    <property type="entry name" value="HELIX-TURN-HELIX TRANSCRIPTIONAL REGULATOR, ICLR FAMILY"/>
    <property type="match status" value="1"/>
</dbReference>
<dbReference type="PANTHER" id="PTHR30136:SF24">
    <property type="entry name" value="HTH-TYPE TRANSCRIPTIONAL REPRESSOR ALLR"/>
    <property type="match status" value="1"/>
</dbReference>
<dbReference type="Pfam" id="PF09339">
    <property type="entry name" value="HTH_IclR"/>
    <property type="match status" value="1"/>
</dbReference>
<dbReference type="Pfam" id="PF01614">
    <property type="entry name" value="IclR_C"/>
    <property type="match status" value="1"/>
</dbReference>
<dbReference type="SMART" id="SM00346">
    <property type="entry name" value="HTH_ICLR"/>
    <property type="match status" value="1"/>
</dbReference>
<dbReference type="SUPFAM" id="SSF55781">
    <property type="entry name" value="GAF domain-like"/>
    <property type="match status" value="1"/>
</dbReference>
<dbReference type="SUPFAM" id="SSF46785">
    <property type="entry name" value="Winged helix' DNA-binding domain"/>
    <property type="match status" value="1"/>
</dbReference>
<dbReference type="PROSITE" id="PS51077">
    <property type="entry name" value="HTH_ICLR"/>
    <property type="match status" value="1"/>
</dbReference>
<dbReference type="PROSITE" id="PS51078">
    <property type="entry name" value="ICLR_ED"/>
    <property type="match status" value="1"/>
</dbReference>
<proteinExistence type="inferred from homology"/>
<name>ALLR_ECOUT</name>